<proteinExistence type="evidence at protein level"/>
<feature type="signal peptide" evidence="3">
    <location>
        <begin position="1"/>
        <end position="26"/>
    </location>
</feature>
<feature type="chain" id="PRO_0000401223" description="CLAVATA3/ESR (CLE)-related protein ESR2">
    <location>
        <begin position="27"/>
        <end position="132"/>
    </location>
</feature>
<feature type="peptide" id="PRO_0000401224" description="ESR2p" evidence="2">
    <location>
        <begin position="79"/>
        <end position="90"/>
    </location>
</feature>
<feature type="region of interest" description="Disordered" evidence="4">
    <location>
        <begin position="68"/>
        <end position="132"/>
    </location>
</feature>
<feature type="compositionally biased region" description="Pro residues" evidence="4">
    <location>
        <begin position="123"/>
        <end position="132"/>
    </location>
</feature>
<feature type="modified residue" description="Hydroxyproline" evidence="2">
    <location>
        <position position="82"/>
    </location>
</feature>
<feature type="modified residue" description="Hydroxyproline" evidence="2">
    <location>
        <position position="85"/>
    </location>
</feature>
<feature type="glycosylation site" description="O-linked (Ara...) hydroxyproline" evidence="2">
    <location>
        <position position="85"/>
    </location>
</feature>
<evidence type="ECO:0000250" key="1"/>
<evidence type="ECO:0000250" key="2">
    <source>
        <dbReference type="UniProtKB" id="O49519"/>
    </source>
</evidence>
<evidence type="ECO:0000255" key="3"/>
<evidence type="ECO:0000256" key="4">
    <source>
        <dbReference type="SAM" id="MobiDB-lite"/>
    </source>
</evidence>
<evidence type="ECO:0000269" key="5">
    <source>
    </source>
</evidence>
<evidence type="ECO:0000269" key="6">
    <source>
    </source>
</evidence>
<evidence type="ECO:0000303" key="7">
    <source>
    </source>
</evidence>
<evidence type="ECO:0000303" key="8">
    <source>
    </source>
</evidence>
<evidence type="ECO:0000305" key="9"/>
<keyword id="KW-0217">Developmental protein</keyword>
<keyword id="KW-0221">Differentiation</keyword>
<keyword id="KW-0325">Glycoprotein</keyword>
<keyword id="KW-0379">Hydroxylation</keyword>
<keyword id="KW-1185">Reference proteome</keyword>
<keyword id="KW-0964">Secreted</keyword>
<keyword id="KW-0732">Signal</keyword>
<reference key="1">
    <citation type="journal article" date="1997" name="Plant J.">
        <title>ZmEsr, a novel endosperm-specific gene expressed in a restricted region around the maize embryo.</title>
        <authorList>
            <person name="Opsahl-Ferstad H.G."/>
            <person name="Le Deunff E."/>
            <person name="Dumas C."/>
            <person name="Rogowsky P.M."/>
        </authorList>
    </citation>
    <scope>NUCLEOTIDE SEQUENCE [GENOMIC DNA]</scope>
    <scope>TISSUE SPECIFICITY</scope>
    <scope>DEVELOPMENTAL STAGE</scope>
    <source>
        <tissue>Leaf</tissue>
    </source>
</reference>
<reference key="2">
    <citation type="journal article" date="2002" name="J. Exp. Bot.">
        <title>Esr proteins are secreted by the cells of the embryo surrounding region.</title>
        <authorList>
            <person name="Bonello J.-F."/>
            <person name="Sevilla-Lecoq S."/>
            <person name="Berne A."/>
            <person name="Risueno M.-C."/>
            <person name="Dumas C."/>
            <person name="Rogowsky P.M."/>
        </authorList>
    </citation>
    <scope>TISSUE SPECIFICITY</scope>
    <scope>DEVELOPMENTAL STAGE</scope>
    <scope>SUBCELLULAR LOCATION</scope>
</reference>
<reference key="3">
    <citation type="journal article" date="2008" name="Cell. Mol. Life Sci.">
        <title>The CLE family of plant polypeptide signaling molecules.</title>
        <authorList>
            <person name="Jun J.H."/>
            <person name="Fiume E."/>
            <person name="Fletcher J.C."/>
        </authorList>
    </citation>
    <scope>REVIEW</scope>
</reference>
<reference key="4">
    <citation type="journal article" date="2010" name="Protoplasma">
        <title>CLE peptide signaling during plant development.</title>
        <authorList>
            <person name="Wang G."/>
            <person name="Fiers M."/>
        </authorList>
    </citation>
    <scope>REVIEW</scope>
</reference>
<dbReference type="EMBL" id="X98499">
    <property type="protein sequence ID" value="CAA67125.1"/>
    <property type="molecule type" value="Genomic_DNA"/>
</dbReference>
<dbReference type="PIR" id="T03280">
    <property type="entry name" value="T03280"/>
</dbReference>
<dbReference type="FunCoup" id="O24565">
    <property type="interactions" value="554"/>
</dbReference>
<dbReference type="STRING" id="4577.O24565"/>
<dbReference type="GlyCosmos" id="O24565">
    <property type="glycosylation" value="1 site, No reported glycans"/>
</dbReference>
<dbReference type="MaizeGDB" id="230285"/>
<dbReference type="InParanoid" id="O24565"/>
<dbReference type="Proteomes" id="UP000007305">
    <property type="component" value="Unplaced"/>
</dbReference>
<dbReference type="ExpressionAtlas" id="O24565">
    <property type="expression patterns" value="baseline and differential"/>
</dbReference>
<dbReference type="GO" id="GO:0048046">
    <property type="term" value="C:apoplast"/>
    <property type="evidence" value="ECO:0000250"/>
    <property type="project" value="UniProtKB"/>
</dbReference>
<dbReference type="GO" id="GO:0033612">
    <property type="term" value="F:receptor serine/threonine kinase binding"/>
    <property type="evidence" value="ECO:0000250"/>
    <property type="project" value="UniProtKB"/>
</dbReference>
<dbReference type="GO" id="GO:0045168">
    <property type="term" value="P:cell-cell signaling involved in cell fate commitment"/>
    <property type="evidence" value="ECO:0000250"/>
    <property type="project" value="UniProtKB"/>
</dbReference>
<dbReference type="InterPro" id="IPR044962">
    <property type="entry name" value="CLV3/ESR"/>
</dbReference>
<dbReference type="PANTHER" id="PTHR36349">
    <property type="entry name" value="PROTEIN CLAVATA 3"/>
    <property type="match status" value="1"/>
</dbReference>
<dbReference type="PANTHER" id="PTHR36349:SF2">
    <property type="entry name" value="PROTEIN CLAVATA 3"/>
    <property type="match status" value="1"/>
</dbReference>
<name>ESR2A_MAIZE</name>
<sequence length="132" mass="14360">MASRMGMVAIVSLFVCALVASTSVNANVWQTDEDAFYSTNKLGVNGNMEMAQQQSGFIGHRPRLASFNRASKQLDSEKRPVPSGPDPIHHSIPSHAPQHPPSYGKAPYEDDRSRASPGLSNPIGPPPFLDRY</sequence>
<protein>
    <recommendedName>
        <fullName evidence="7">CLAVATA3/ESR (CLE)-related protein ESR2</fullName>
        <shortName evidence="7">ZmESR2</shortName>
    </recommendedName>
    <alternativeName>
        <fullName evidence="8">Embryo surrounding region protein 2</fullName>
    </alternativeName>
    <component>
        <recommendedName>
            <fullName evidence="8">ESR2p</fullName>
        </recommendedName>
    </component>
</protein>
<organism>
    <name type="scientific">Zea mays</name>
    <name type="common">Maize</name>
    <dbReference type="NCBI Taxonomy" id="4577"/>
    <lineage>
        <taxon>Eukaryota</taxon>
        <taxon>Viridiplantae</taxon>
        <taxon>Streptophyta</taxon>
        <taxon>Embryophyta</taxon>
        <taxon>Tracheophyta</taxon>
        <taxon>Spermatophyta</taxon>
        <taxon>Magnoliopsida</taxon>
        <taxon>Liliopsida</taxon>
        <taxon>Poales</taxon>
        <taxon>Poaceae</taxon>
        <taxon>PACMAD clade</taxon>
        <taxon>Panicoideae</taxon>
        <taxon>Andropogonodae</taxon>
        <taxon>Andropogoneae</taxon>
        <taxon>Tripsacinae</taxon>
        <taxon>Zea</taxon>
    </lineage>
</organism>
<accession>O24565</accession>
<gene>
    <name evidence="7" type="primary">ESR2</name>
    <name evidence="8" type="synonym">ESR2g1</name>
</gene>
<comment type="function">
    <molecule>ESR2p</molecule>
    <text evidence="1">Extracellular signal peptide that regulates cell fate.</text>
</comment>
<comment type="subcellular location">
    <molecule>ESR2p</molecule>
    <subcellularLocation>
        <location evidence="5">Secreted</location>
        <location evidence="5">Extracellular space</location>
    </subcellularLocation>
</comment>
<comment type="tissue specificity">
    <molecule>ESR2p</molecule>
    <text evidence="5 6">Seed endosperm.</text>
</comment>
<comment type="developmental stage">
    <molecule>ESR2p</molecule>
    <text evidence="5 6">Expressed specifically in the embryo surrounding region at the micropylar end of the seed endosperm at early stages (4 to 7 days after pollination, DAP) and ever-decreasing parts of the suspensor at subsequent stages (at protein level).</text>
</comment>
<comment type="PTM">
    <molecule>ESR2p</molecule>
    <text evidence="2">The O-glycosylation (arabinosylation) of the hydroxyproline Pro-85 enhances binding affinity of the ESR2p peptide for its receptor.</text>
</comment>
<comment type="similarity">
    <text evidence="9">Belongs to the CLV3/ESR signal peptide family.</text>
</comment>